<evidence type="ECO:0000255" key="1">
    <source>
        <dbReference type="HAMAP-Rule" id="MF_00249"/>
    </source>
</evidence>
<evidence type="ECO:0000305" key="2"/>
<gene>
    <name evidence="1" type="primary">hslU</name>
    <name type="ordered locus">HD_2007</name>
</gene>
<keyword id="KW-0067">ATP-binding</keyword>
<keyword id="KW-0143">Chaperone</keyword>
<keyword id="KW-0963">Cytoplasm</keyword>
<keyword id="KW-0547">Nucleotide-binding</keyword>
<keyword id="KW-1185">Reference proteome</keyword>
<comment type="function">
    <text evidence="1">ATPase subunit of a proteasome-like degradation complex; this subunit has chaperone activity. The binding of ATP and its subsequent hydrolysis by HslU are essential for unfolding of protein substrates subsequently hydrolyzed by HslV. HslU recognizes the N-terminal part of its protein substrates and unfolds these before they are guided to HslV for hydrolysis.</text>
</comment>
<comment type="subunit">
    <text evidence="1">A double ring-shaped homohexamer of HslV is capped on each side by a ring-shaped HslU homohexamer. The assembly of the HslU/HslV complex is dependent on binding of ATP.</text>
</comment>
<comment type="subcellular location">
    <subcellularLocation>
        <location evidence="1">Cytoplasm</location>
    </subcellularLocation>
</comment>
<comment type="similarity">
    <text evidence="1">Belongs to the ClpX chaperone family. HslU subfamily.</text>
</comment>
<comment type="sequence caution" evidence="2">
    <conflict type="erroneous initiation">
        <sequence resource="EMBL-CDS" id="AAP96719"/>
    </conflict>
</comment>
<name>HSLU_HAEDU</name>
<proteinExistence type="inferred from homology"/>
<sequence>MSITPREIVSELDAHIIGQTEAKRAVAIALRNRWRRMQLSEDLRQEVTPKNILMIGPTGVGKTEIARRLAKLAQAPFIKVEATKFTEVGYVGKEVDSIIKDLTEVSMKLVKEQAVEKNRIRAQDAAEDRILDVLLPPAKDQWGNVQETDNASTRQIFRKKLREGSLDDKEIDIDVASQVNVEIMTPPGMEEMTSQLQSLFEGMSPNKTQKRKMKIKDALKVMLDEEAAKLVNQEELKQQAIEAVEQHGIVFIDEIDKICKKSGNSGGDVSREGVQRDLLPIIEGSTVNTKYGMVKTDHILFICSGAFQIARPSDLLPELQGRLPIHVELKSLTKADFERILTEPNASLTLQYRELMKTEGVTIEFTQDGISKIAESAFRVNEKTENIGARRLHTVLERLMDGISFDANERAGEHIVIDEKYVATALNDVVENEDLSRFIL</sequence>
<feature type="chain" id="PRO_0000160507" description="ATP-dependent protease ATPase subunit HslU">
    <location>
        <begin position="1"/>
        <end position="440"/>
    </location>
</feature>
<feature type="binding site" evidence="1">
    <location>
        <position position="17"/>
    </location>
    <ligand>
        <name>ATP</name>
        <dbReference type="ChEBI" id="CHEBI:30616"/>
    </ligand>
</feature>
<feature type="binding site" evidence="1">
    <location>
        <begin position="59"/>
        <end position="64"/>
    </location>
    <ligand>
        <name>ATP</name>
        <dbReference type="ChEBI" id="CHEBI:30616"/>
    </ligand>
</feature>
<feature type="binding site" evidence="1">
    <location>
        <position position="253"/>
    </location>
    <ligand>
        <name>ATP</name>
        <dbReference type="ChEBI" id="CHEBI:30616"/>
    </ligand>
</feature>
<feature type="binding site" evidence="1">
    <location>
        <position position="318"/>
    </location>
    <ligand>
        <name>ATP</name>
        <dbReference type="ChEBI" id="CHEBI:30616"/>
    </ligand>
</feature>
<feature type="binding site" evidence="1">
    <location>
        <position position="390"/>
    </location>
    <ligand>
        <name>ATP</name>
        <dbReference type="ChEBI" id="CHEBI:30616"/>
    </ligand>
</feature>
<protein>
    <recommendedName>
        <fullName evidence="1">ATP-dependent protease ATPase subunit HslU</fullName>
    </recommendedName>
    <alternativeName>
        <fullName evidence="1">Unfoldase HslU</fullName>
    </alternativeName>
</protein>
<accession>Q7VKB3</accession>
<organism>
    <name type="scientific">Haemophilus ducreyi (strain 35000HP / ATCC 700724)</name>
    <dbReference type="NCBI Taxonomy" id="233412"/>
    <lineage>
        <taxon>Bacteria</taxon>
        <taxon>Pseudomonadati</taxon>
        <taxon>Pseudomonadota</taxon>
        <taxon>Gammaproteobacteria</taxon>
        <taxon>Pasteurellales</taxon>
        <taxon>Pasteurellaceae</taxon>
        <taxon>Haemophilus</taxon>
    </lineage>
</organism>
<dbReference type="EMBL" id="AE017143">
    <property type="protein sequence ID" value="AAP96719.1"/>
    <property type="status" value="ALT_INIT"/>
    <property type="molecule type" value="Genomic_DNA"/>
</dbReference>
<dbReference type="SMR" id="Q7VKB3"/>
<dbReference type="STRING" id="233412.HD_2007"/>
<dbReference type="KEGG" id="hdu:HD_2007"/>
<dbReference type="eggNOG" id="COG1220">
    <property type="taxonomic scope" value="Bacteria"/>
</dbReference>
<dbReference type="HOGENOM" id="CLU_033123_0_0_6"/>
<dbReference type="OrthoDB" id="9804062at2"/>
<dbReference type="Proteomes" id="UP000001022">
    <property type="component" value="Chromosome"/>
</dbReference>
<dbReference type="GO" id="GO:0009376">
    <property type="term" value="C:HslUV protease complex"/>
    <property type="evidence" value="ECO:0007669"/>
    <property type="project" value="UniProtKB-UniRule"/>
</dbReference>
<dbReference type="GO" id="GO:0005524">
    <property type="term" value="F:ATP binding"/>
    <property type="evidence" value="ECO:0007669"/>
    <property type="project" value="UniProtKB-UniRule"/>
</dbReference>
<dbReference type="GO" id="GO:0016887">
    <property type="term" value="F:ATP hydrolysis activity"/>
    <property type="evidence" value="ECO:0007669"/>
    <property type="project" value="InterPro"/>
</dbReference>
<dbReference type="GO" id="GO:0008233">
    <property type="term" value="F:peptidase activity"/>
    <property type="evidence" value="ECO:0007669"/>
    <property type="project" value="InterPro"/>
</dbReference>
<dbReference type="GO" id="GO:0036402">
    <property type="term" value="F:proteasome-activating activity"/>
    <property type="evidence" value="ECO:0007669"/>
    <property type="project" value="UniProtKB-UniRule"/>
</dbReference>
<dbReference type="GO" id="GO:0043335">
    <property type="term" value="P:protein unfolding"/>
    <property type="evidence" value="ECO:0007669"/>
    <property type="project" value="UniProtKB-UniRule"/>
</dbReference>
<dbReference type="GO" id="GO:0051603">
    <property type="term" value="P:proteolysis involved in protein catabolic process"/>
    <property type="evidence" value="ECO:0007669"/>
    <property type="project" value="TreeGrafter"/>
</dbReference>
<dbReference type="CDD" id="cd19498">
    <property type="entry name" value="RecA-like_HslU"/>
    <property type="match status" value="1"/>
</dbReference>
<dbReference type="FunFam" id="1.10.8.10:FF:000028">
    <property type="entry name" value="ATP-dependent protease ATPase subunit HslU"/>
    <property type="match status" value="1"/>
</dbReference>
<dbReference type="FunFam" id="3.40.50.300:FF:000213">
    <property type="entry name" value="ATP-dependent protease ATPase subunit HslU"/>
    <property type="match status" value="1"/>
</dbReference>
<dbReference type="FunFam" id="3.40.50.300:FF:000220">
    <property type="entry name" value="ATP-dependent protease ATPase subunit HslU"/>
    <property type="match status" value="1"/>
</dbReference>
<dbReference type="Gene3D" id="1.10.8.60">
    <property type="match status" value="1"/>
</dbReference>
<dbReference type="Gene3D" id="1.10.8.10">
    <property type="entry name" value="DNA helicase RuvA subunit, C-terminal domain"/>
    <property type="match status" value="1"/>
</dbReference>
<dbReference type="Gene3D" id="3.40.50.300">
    <property type="entry name" value="P-loop containing nucleotide triphosphate hydrolases"/>
    <property type="match status" value="2"/>
</dbReference>
<dbReference type="HAMAP" id="MF_00249">
    <property type="entry name" value="HslU"/>
    <property type="match status" value="1"/>
</dbReference>
<dbReference type="InterPro" id="IPR003593">
    <property type="entry name" value="AAA+_ATPase"/>
</dbReference>
<dbReference type="InterPro" id="IPR050052">
    <property type="entry name" value="ATP-dep_Clp_protease_ClpX"/>
</dbReference>
<dbReference type="InterPro" id="IPR003959">
    <property type="entry name" value="ATPase_AAA_core"/>
</dbReference>
<dbReference type="InterPro" id="IPR019489">
    <property type="entry name" value="Clp_ATPase_C"/>
</dbReference>
<dbReference type="InterPro" id="IPR004491">
    <property type="entry name" value="HslU"/>
</dbReference>
<dbReference type="InterPro" id="IPR027417">
    <property type="entry name" value="P-loop_NTPase"/>
</dbReference>
<dbReference type="NCBIfam" id="TIGR00390">
    <property type="entry name" value="hslU"/>
    <property type="match status" value="1"/>
</dbReference>
<dbReference type="NCBIfam" id="NF003544">
    <property type="entry name" value="PRK05201.1"/>
    <property type="match status" value="1"/>
</dbReference>
<dbReference type="PANTHER" id="PTHR48102">
    <property type="entry name" value="ATP-DEPENDENT CLP PROTEASE ATP-BINDING SUBUNIT CLPX-LIKE, MITOCHONDRIAL-RELATED"/>
    <property type="match status" value="1"/>
</dbReference>
<dbReference type="PANTHER" id="PTHR48102:SF3">
    <property type="entry name" value="ATP-DEPENDENT PROTEASE ATPASE SUBUNIT HSLU"/>
    <property type="match status" value="1"/>
</dbReference>
<dbReference type="Pfam" id="PF00004">
    <property type="entry name" value="AAA"/>
    <property type="match status" value="1"/>
</dbReference>
<dbReference type="Pfam" id="PF07724">
    <property type="entry name" value="AAA_2"/>
    <property type="match status" value="1"/>
</dbReference>
<dbReference type="SMART" id="SM00382">
    <property type="entry name" value="AAA"/>
    <property type="match status" value="1"/>
</dbReference>
<dbReference type="SMART" id="SM01086">
    <property type="entry name" value="ClpB_D2-small"/>
    <property type="match status" value="1"/>
</dbReference>
<dbReference type="SUPFAM" id="SSF52540">
    <property type="entry name" value="P-loop containing nucleoside triphosphate hydrolases"/>
    <property type="match status" value="1"/>
</dbReference>
<reference key="1">
    <citation type="submission" date="2003-06" db="EMBL/GenBank/DDBJ databases">
        <title>The complete genome sequence of Haemophilus ducreyi.</title>
        <authorList>
            <person name="Munson R.S. Jr."/>
            <person name="Ray W.C."/>
            <person name="Mahairas G."/>
            <person name="Sabo P."/>
            <person name="Mungur R."/>
            <person name="Johnson L."/>
            <person name="Nguyen D."/>
            <person name="Wang J."/>
            <person name="Forst C."/>
            <person name="Hood L."/>
        </authorList>
    </citation>
    <scope>NUCLEOTIDE SEQUENCE [LARGE SCALE GENOMIC DNA]</scope>
    <source>
        <strain>35000HP / ATCC 700724</strain>
    </source>
</reference>